<sequence length="667" mass="77339">MGDNVFLEPDPWASSSNWGSPVKPLNYKTAIGNSSIPLQYRNYWDVFQANNVLLFPEEESYSDIFHVPQDVMKEFFTLIESSSNQPLRQIQFFVLLALVACYQLGVPSTLEQIFKQRNVLPILQRFNPELFNRSSDNETPLFPNNSPPASTTALNLSSNIVPSINESKILEQEDDDVSNKSLPHAQQSIIRSFPDIQKQPKGFFSYPSSTVSSIAPSTLEAGNLHSQQPPKFSVDSSVDDNAITPRKPFSKIPNRLSPSTQPLLSNSRHSSFRLASSSTSFPASLEMNVDIDLEPSGYFFYRHNNYIISDSSNTREVLRRYSDFFWLHSYLMKKYPFRRVPLIPLKKFHFAKRNASTQNSFLEHRRQELSDFVNDLSHHPIFSNDEVVRVFFTEPNVFKNWRRENQKRIDQEIEQFLVVPQSQVPDASETVKERLLKLNMSTTTAINNQLNIFRIFEKMIFTLQHFHEDFLRLQNSFNCLLDSGLYHQVFTSTFAQNESKIMSMASGHFYNIDSLLHQQNDAVKHTFLLGLSKEIKILISLRLLIERISEVFSTDLTKVRHTISNDENLLRETANSDESGRNRTFLNRSSKKRAENSLKSKKELYLKNLNQRYQIAHELEQELSYLQDYVFSLGNPYVEYCKQHVKLEEESLKIWHTLESDFSRLET</sequence>
<reference key="1">
    <citation type="journal article" date="2002" name="Nature">
        <title>The genome sequence of Schizosaccharomyces pombe.</title>
        <authorList>
            <person name="Wood V."/>
            <person name="Gwilliam R."/>
            <person name="Rajandream M.A."/>
            <person name="Lyne M.H."/>
            <person name="Lyne R."/>
            <person name="Stewart A."/>
            <person name="Sgouros J.G."/>
            <person name="Peat N."/>
            <person name="Hayles J."/>
            <person name="Baker S.G."/>
            <person name="Basham D."/>
            <person name="Bowman S."/>
            <person name="Brooks K."/>
            <person name="Brown D."/>
            <person name="Brown S."/>
            <person name="Chillingworth T."/>
            <person name="Churcher C.M."/>
            <person name="Collins M."/>
            <person name="Connor R."/>
            <person name="Cronin A."/>
            <person name="Davis P."/>
            <person name="Feltwell T."/>
            <person name="Fraser A."/>
            <person name="Gentles S."/>
            <person name="Goble A."/>
            <person name="Hamlin N."/>
            <person name="Harris D.E."/>
            <person name="Hidalgo J."/>
            <person name="Hodgson G."/>
            <person name="Holroyd S."/>
            <person name="Hornsby T."/>
            <person name="Howarth S."/>
            <person name="Huckle E.J."/>
            <person name="Hunt S."/>
            <person name="Jagels K."/>
            <person name="James K.D."/>
            <person name="Jones L."/>
            <person name="Jones M."/>
            <person name="Leather S."/>
            <person name="McDonald S."/>
            <person name="McLean J."/>
            <person name="Mooney P."/>
            <person name="Moule S."/>
            <person name="Mungall K.L."/>
            <person name="Murphy L.D."/>
            <person name="Niblett D."/>
            <person name="Odell C."/>
            <person name="Oliver K."/>
            <person name="O'Neil S."/>
            <person name="Pearson D."/>
            <person name="Quail M.A."/>
            <person name="Rabbinowitsch E."/>
            <person name="Rutherford K.M."/>
            <person name="Rutter S."/>
            <person name="Saunders D."/>
            <person name="Seeger K."/>
            <person name="Sharp S."/>
            <person name="Skelton J."/>
            <person name="Simmonds M.N."/>
            <person name="Squares R."/>
            <person name="Squares S."/>
            <person name="Stevens K."/>
            <person name="Taylor K."/>
            <person name="Taylor R.G."/>
            <person name="Tivey A."/>
            <person name="Walsh S.V."/>
            <person name="Warren T."/>
            <person name="Whitehead S."/>
            <person name="Woodward J.R."/>
            <person name="Volckaert G."/>
            <person name="Aert R."/>
            <person name="Robben J."/>
            <person name="Grymonprez B."/>
            <person name="Weltjens I."/>
            <person name="Vanstreels E."/>
            <person name="Rieger M."/>
            <person name="Schaefer M."/>
            <person name="Mueller-Auer S."/>
            <person name="Gabel C."/>
            <person name="Fuchs M."/>
            <person name="Duesterhoeft A."/>
            <person name="Fritzc C."/>
            <person name="Holzer E."/>
            <person name="Moestl D."/>
            <person name="Hilbert H."/>
            <person name="Borzym K."/>
            <person name="Langer I."/>
            <person name="Beck A."/>
            <person name="Lehrach H."/>
            <person name="Reinhardt R."/>
            <person name="Pohl T.M."/>
            <person name="Eger P."/>
            <person name="Zimmermann W."/>
            <person name="Wedler H."/>
            <person name="Wambutt R."/>
            <person name="Purnelle B."/>
            <person name="Goffeau A."/>
            <person name="Cadieu E."/>
            <person name="Dreano S."/>
            <person name="Gloux S."/>
            <person name="Lelaure V."/>
            <person name="Mottier S."/>
            <person name="Galibert F."/>
            <person name="Aves S.J."/>
            <person name="Xiang Z."/>
            <person name="Hunt C."/>
            <person name="Moore K."/>
            <person name="Hurst S.M."/>
            <person name="Lucas M."/>
            <person name="Rochet M."/>
            <person name="Gaillardin C."/>
            <person name="Tallada V.A."/>
            <person name="Garzon A."/>
            <person name="Thode G."/>
            <person name="Daga R.R."/>
            <person name="Cruzado L."/>
            <person name="Jimenez J."/>
            <person name="Sanchez M."/>
            <person name="del Rey F."/>
            <person name="Benito J."/>
            <person name="Dominguez A."/>
            <person name="Revuelta J.L."/>
            <person name="Moreno S."/>
            <person name="Armstrong J."/>
            <person name="Forsburg S.L."/>
            <person name="Cerutti L."/>
            <person name="Lowe T."/>
            <person name="McCombie W.R."/>
            <person name="Paulsen I."/>
            <person name="Potashkin J."/>
            <person name="Shpakovski G.V."/>
            <person name="Ussery D."/>
            <person name="Barrell B.G."/>
            <person name="Nurse P."/>
        </authorList>
    </citation>
    <scope>NUCLEOTIDE SEQUENCE [LARGE SCALE GENOMIC DNA]</scope>
    <source>
        <strain>972 / ATCC 24843</strain>
    </source>
</reference>
<reference key="2">
    <citation type="journal article" date="2015" name="Genome Biol. Evol.">
        <title>Bulk segregant analysis reveals the genetic basis of a natural trait variation in fission yeast.</title>
        <authorList>
            <person name="Hu W."/>
            <person name="Suo F."/>
            <person name="Du L.L."/>
        </authorList>
    </citation>
    <scope>SEQUENCE REVISION</scope>
</reference>
<dbReference type="EMBL" id="CU329670">
    <property type="protein sequence ID" value="CAK9838442.1"/>
    <property type="molecule type" value="Genomic_DNA"/>
</dbReference>
<dbReference type="PIR" id="T11628">
    <property type="entry name" value="T11628"/>
</dbReference>
<dbReference type="SMR" id="O14120"/>
<dbReference type="BioGRID" id="279556">
    <property type="interactions" value="17"/>
</dbReference>
<dbReference type="FunCoup" id="O14120">
    <property type="interactions" value="95"/>
</dbReference>
<dbReference type="STRING" id="284812.O14120"/>
<dbReference type="iPTMnet" id="O14120"/>
<dbReference type="PaxDb" id="4896-SPAC3A11.06.1"/>
<dbReference type="EnsemblFungi" id="SPAC3A11.06.1">
    <property type="protein sequence ID" value="SPAC3A11.06.1:pep"/>
    <property type="gene ID" value="SPAC3A11.06"/>
</dbReference>
<dbReference type="PomBase" id="SPAC3A11.06">
    <property type="gene designation" value="mvp1"/>
</dbReference>
<dbReference type="VEuPathDB" id="FungiDB:SPAC3A11.06"/>
<dbReference type="eggNOG" id="KOG2273">
    <property type="taxonomic scope" value="Eukaryota"/>
</dbReference>
<dbReference type="HOGENOM" id="CLU_413408_0_0_1"/>
<dbReference type="InParanoid" id="O14120"/>
<dbReference type="OMA" id="QNYVHEQ"/>
<dbReference type="PhylomeDB" id="O14120"/>
<dbReference type="PRO" id="PR:O14120"/>
<dbReference type="Proteomes" id="UP000002485">
    <property type="component" value="Chromosome I"/>
</dbReference>
<dbReference type="GO" id="GO:0005829">
    <property type="term" value="C:cytosol"/>
    <property type="evidence" value="ECO:0007669"/>
    <property type="project" value="GOC"/>
</dbReference>
<dbReference type="GO" id="GO:0005768">
    <property type="term" value="C:endosome"/>
    <property type="evidence" value="ECO:0000318"/>
    <property type="project" value="GO_Central"/>
</dbReference>
<dbReference type="GO" id="GO:0010008">
    <property type="term" value="C:endosome membrane"/>
    <property type="evidence" value="ECO:0007669"/>
    <property type="project" value="UniProtKB-SubCell"/>
</dbReference>
<dbReference type="GO" id="GO:0000329">
    <property type="term" value="C:fungal-type vacuole membrane"/>
    <property type="evidence" value="ECO:0007005"/>
    <property type="project" value="PomBase"/>
</dbReference>
<dbReference type="GO" id="GO:0005794">
    <property type="term" value="C:Golgi apparatus"/>
    <property type="evidence" value="ECO:0007005"/>
    <property type="project" value="PomBase"/>
</dbReference>
<dbReference type="GO" id="GO:0016020">
    <property type="term" value="C:membrane"/>
    <property type="evidence" value="ECO:0007669"/>
    <property type="project" value="UniProtKB-KW"/>
</dbReference>
<dbReference type="GO" id="GO:0035091">
    <property type="term" value="F:phosphatidylinositol binding"/>
    <property type="evidence" value="ECO:0007669"/>
    <property type="project" value="InterPro"/>
</dbReference>
<dbReference type="GO" id="GO:0032266">
    <property type="term" value="F:phosphatidylinositol-3-phosphate binding"/>
    <property type="evidence" value="ECO:0000318"/>
    <property type="project" value="GO_Central"/>
</dbReference>
<dbReference type="GO" id="GO:0097749">
    <property type="term" value="P:membrane tubulation"/>
    <property type="evidence" value="ECO:0000266"/>
    <property type="project" value="PomBase"/>
</dbReference>
<dbReference type="GO" id="GO:0006623">
    <property type="term" value="P:protein targeting to vacuole"/>
    <property type="evidence" value="ECO:0000318"/>
    <property type="project" value="GO_Central"/>
</dbReference>
<dbReference type="GO" id="GO:0015031">
    <property type="term" value="P:protein transport"/>
    <property type="evidence" value="ECO:0007669"/>
    <property type="project" value="UniProtKB-KW"/>
</dbReference>
<dbReference type="GO" id="GO:0042147">
    <property type="term" value="P:retrograde transport, endosome to Golgi"/>
    <property type="evidence" value="ECO:0007669"/>
    <property type="project" value="InterPro"/>
</dbReference>
<dbReference type="Gene3D" id="3.30.1520.10">
    <property type="entry name" value="Phox-like domain"/>
    <property type="match status" value="1"/>
</dbReference>
<dbReference type="InterPro" id="IPR001683">
    <property type="entry name" value="PX_dom"/>
</dbReference>
<dbReference type="InterPro" id="IPR036871">
    <property type="entry name" value="PX_dom_sf"/>
</dbReference>
<dbReference type="InterPro" id="IPR028662">
    <property type="entry name" value="SNX8/Mvp1"/>
</dbReference>
<dbReference type="InterPro" id="IPR045734">
    <property type="entry name" value="Snx8_BAR_dom"/>
</dbReference>
<dbReference type="PANTHER" id="PTHR47554">
    <property type="entry name" value="SORTING NEXIN MVP1"/>
    <property type="match status" value="1"/>
</dbReference>
<dbReference type="PANTHER" id="PTHR47554:SF1">
    <property type="entry name" value="SORTING NEXIN MVP1"/>
    <property type="match status" value="1"/>
</dbReference>
<dbReference type="Pfam" id="PF00787">
    <property type="entry name" value="PX"/>
    <property type="match status" value="1"/>
</dbReference>
<dbReference type="Pfam" id="PF19566">
    <property type="entry name" value="Snx8_BAR_dom"/>
    <property type="match status" value="1"/>
</dbReference>
<dbReference type="SMART" id="SM00312">
    <property type="entry name" value="PX"/>
    <property type="match status" value="1"/>
</dbReference>
<dbReference type="SUPFAM" id="SSF64268">
    <property type="entry name" value="PX domain"/>
    <property type="match status" value="1"/>
</dbReference>
<dbReference type="PROSITE" id="PS50195">
    <property type="entry name" value="PX"/>
    <property type="match status" value="1"/>
</dbReference>
<evidence type="ECO:0000250" key="1"/>
<evidence type="ECO:0000250" key="2">
    <source>
        <dbReference type="UniProtKB" id="P40959"/>
    </source>
</evidence>
<evidence type="ECO:0000255" key="3">
    <source>
        <dbReference type="PROSITE-ProRule" id="PRU00147"/>
    </source>
</evidence>
<evidence type="ECO:0000256" key="4">
    <source>
        <dbReference type="SAM" id="MobiDB-lite"/>
    </source>
</evidence>
<evidence type="ECO:0000305" key="5"/>
<evidence type="ECO:0000312" key="6">
    <source>
        <dbReference type="PomBase" id="SPAC3A11.06"/>
    </source>
</evidence>
<keyword id="KW-0963">Cytoplasm</keyword>
<keyword id="KW-0967">Endosome</keyword>
<keyword id="KW-0472">Membrane</keyword>
<keyword id="KW-0653">Protein transport</keyword>
<keyword id="KW-1185">Reference proteome</keyword>
<keyword id="KW-0813">Transport</keyword>
<gene>
    <name type="primary">mvp1</name>
    <name evidence="6" type="ORF">SPAC3A11.06</name>
</gene>
<accession>O14120</accession>
<accession>A0AAN2HAC0</accession>
<feature type="chain" id="PRO_0000238601" description="Sorting nexin mvp1">
    <location>
        <begin position="1"/>
        <end position="667"/>
    </location>
</feature>
<feature type="domain" description="PX" evidence="3">
    <location>
        <begin position="279"/>
        <end position="398"/>
    </location>
</feature>
<feature type="region of interest" description="Disordered" evidence="4">
    <location>
        <begin position="221"/>
        <end position="268"/>
    </location>
</feature>
<feature type="region of interest" description="Disordered" evidence="4">
    <location>
        <begin position="574"/>
        <end position="594"/>
    </location>
</feature>
<feature type="compositionally biased region" description="Polar residues" evidence="4">
    <location>
        <begin position="224"/>
        <end position="236"/>
    </location>
</feature>
<feature type="binding site" evidence="1">
    <location>
        <position position="320"/>
    </location>
    <ligand>
        <name>a 1,2-diacyl-sn-glycero-3-phospho-(1D-myo-inositol-3-phosphate)</name>
        <dbReference type="ChEBI" id="CHEBI:58088"/>
    </ligand>
</feature>
<feature type="binding site" evidence="1">
    <location>
        <position position="322"/>
    </location>
    <ligand>
        <name>a 1,2-diacyl-sn-glycero-3-phospho-(1D-myo-inositol-3-phosphate)</name>
        <dbReference type="ChEBI" id="CHEBI:58088"/>
    </ligand>
</feature>
<feature type="binding site" evidence="1">
    <location>
        <position position="346"/>
    </location>
    <ligand>
        <name>a 1,2-diacyl-sn-glycero-3-phospho-(1D-myo-inositol-3-phosphate)</name>
        <dbReference type="ChEBI" id="CHEBI:58088"/>
    </ligand>
</feature>
<organism>
    <name type="scientific">Schizosaccharomyces pombe (strain 972 / ATCC 24843)</name>
    <name type="common">Fission yeast</name>
    <dbReference type="NCBI Taxonomy" id="284812"/>
    <lineage>
        <taxon>Eukaryota</taxon>
        <taxon>Fungi</taxon>
        <taxon>Dikarya</taxon>
        <taxon>Ascomycota</taxon>
        <taxon>Taphrinomycotina</taxon>
        <taxon>Schizosaccharomycetes</taxon>
        <taxon>Schizosaccharomycetales</taxon>
        <taxon>Schizosaccharomycetaceae</taxon>
        <taxon>Schizosaccharomyces</taxon>
    </lineage>
</organism>
<name>MVP1_SCHPO</name>
<proteinExistence type="inferred from homology"/>
<comment type="function">
    <text evidence="2">Required for vacuolar protein sorting. Component of the retromer-mediated endosome-to-Golgi retrograde pathway. Required for efficient cargo export from the endosome, promoting Vps1-mediated fission of retromer-coated tubules that bud from the endosome.</text>
</comment>
<comment type="subunit">
    <text evidence="2">Homodimer. Forms an autoinhibited tetramer consisting of 2 homodimers that self-interact, wherein the membrane-interacting BAR surfaces are sequestered and the PX lipid-binding sites are occluded. Interacts with Vps1.</text>
</comment>
<comment type="subcellular location">
    <subcellularLocation>
        <location evidence="2">Cytoplasm</location>
    </subcellularLocation>
    <subcellularLocation>
        <location evidence="2">Endosome membrane</location>
        <topology evidence="2">Peripheral membrane protein</topology>
        <orientation evidence="2">Cytoplasmic side</orientation>
    </subcellularLocation>
    <text evidence="2">Localizes throughout the endosomal system binding to phosphatidylinositol 3-phosphate (PtdIns3P). Enriched on retromer SNX-BAR-decorated endosomes.</text>
</comment>
<comment type="domain">
    <text evidence="2">The PX domain binds phosphatidylinositol 3-phosphate, which is necessary for peripheral membrane localization.</text>
</comment>
<comment type="similarity">
    <text evidence="5">Belongs to the sorting nexin family.</text>
</comment>
<protein>
    <recommendedName>
        <fullName>Sorting nexin mvp1</fullName>
    </recommendedName>
</protein>